<protein>
    <recommendedName>
        <fullName>Ethylene-responsive transcription factor ERF008</fullName>
    </recommendedName>
</protein>
<organism>
    <name type="scientific">Arabidopsis thaliana</name>
    <name type="common">Mouse-ear cress</name>
    <dbReference type="NCBI Taxonomy" id="3702"/>
    <lineage>
        <taxon>Eukaryota</taxon>
        <taxon>Viridiplantae</taxon>
        <taxon>Streptophyta</taxon>
        <taxon>Embryophyta</taxon>
        <taxon>Tracheophyta</taxon>
        <taxon>Spermatophyta</taxon>
        <taxon>Magnoliopsida</taxon>
        <taxon>eudicotyledons</taxon>
        <taxon>Gunneridae</taxon>
        <taxon>Pentapetalae</taxon>
        <taxon>rosids</taxon>
        <taxon>malvids</taxon>
        <taxon>Brassicales</taxon>
        <taxon>Brassicaceae</taxon>
        <taxon>Camelineae</taxon>
        <taxon>Arabidopsis</taxon>
    </lineage>
</organism>
<keyword id="KW-0010">Activator</keyword>
<keyword id="KW-0238">DNA-binding</keyword>
<keyword id="KW-0936">Ethylene signaling pathway</keyword>
<keyword id="KW-0539">Nucleus</keyword>
<keyword id="KW-1185">Reference proteome</keyword>
<keyword id="KW-0804">Transcription</keyword>
<keyword id="KW-0805">Transcription regulation</keyword>
<proteinExistence type="evidence at transcript level"/>
<feature type="chain" id="PRO_0000290371" description="Ethylene-responsive transcription factor ERF008">
    <location>
        <begin position="1"/>
        <end position="176"/>
    </location>
</feature>
<feature type="DNA-binding region" description="AP2/ERF" evidence="2">
    <location>
        <begin position="27"/>
        <end position="84"/>
    </location>
</feature>
<feature type="region of interest" description="Disordered" evidence="3">
    <location>
        <begin position="138"/>
        <end position="176"/>
    </location>
</feature>
<feature type="compositionally biased region" description="Basic and acidic residues" evidence="3">
    <location>
        <begin position="152"/>
        <end position="161"/>
    </location>
</feature>
<feature type="compositionally biased region" description="Acidic residues" evidence="3">
    <location>
        <begin position="163"/>
        <end position="176"/>
    </location>
</feature>
<dbReference type="EMBL" id="AC002391">
    <property type="protein sequence ID" value="AAB87098.1"/>
    <property type="molecule type" value="Genomic_DNA"/>
</dbReference>
<dbReference type="EMBL" id="CP002685">
    <property type="protein sequence ID" value="AEC07444.1"/>
    <property type="molecule type" value="Genomic_DNA"/>
</dbReference>
<dbReference type="EMBL" id="AK118495">
    <property type="protein sequence ID" value="BAC43099.1"/>
    <property type="molecule type" value="mRNA"/>
</dbReference>
<dbReference type="EMBL" id="BT003741">
    <property type="protein sequence ID" value="AAO39969.1"/>
    <property type="molecule type" value="mRNA"/>
</dbReference>
<dbReference type="PIR" id="T00498">
    <property type="entry name" value="T00498"/>
</dbReference>
<dbReference type="SMR" id="O22174"/>
<dbReference type="FunCoup" id="O22174">
    <property type="interactions" value="24"/>
</dbReference>
<dbReference type="STRING" id="3702.O22174"/>
<dbReference type="GlyGen" id="O22174">
    <property type="glycosylation" value="1 site"/>
</dbReference>
<dbReference type="PaxDb" id="3702-AT2G23340.1"/>
<dbReference type="EnsemblPlants" id="AT2G23340.1">
    <property type="protein sequence ID" value="AT2G23340.1"/>
    <property type="gene ID" value="AT2G23340"/>
</dbReference>
<dbReference type="GeneID" id="816866"/>
<dbReference type="Gramene" id="AT2G23340.1">
    <property type="protein sequence ID" value="AT2G23340.1"/>
    <property type="gene ID" value="AT2G23340"/>
</dbReference>
<dbReference type="KEGG" id="ath:AT2G23340"/>
<dbReference type="Araport" id="AT2G23340"/>
<dbReference type="TAIR" id="AT2G23340">
    <property type="gene designation" value="DEAR3"/>
</dbReference>
<dbReference type="eggNOG" id="ENOG502S0BY">
    <property type="taxonomic scope" value="Eukaryota"/>
</dbReference>
<dbReference type="HOGENOM" id="CLU_063331_7_2_1"/>
<dbReference type="InParanoid" id="O22174"/>
<dbReference type="OMA" id="EREMGTK"/>
<dbReference type="PhylomeDB" id="O22174"/>
<dbReference type="PRO" id="PR:O22174"/>
<dbReference type="Proteomes" id="UP000006548">
    <property type="component" value="Chromosome 2"/>
</dbReference>
<dbReference type="ExpressionAtlas" id="O22174">
    <property type="expression patterns" value="baseline and differential"/>
</dbReference>
<dbReference type="GO" id="GO:0005634">
    <property type="term" value="C:nucleus"/>
    <property type="evidence" value="ECO:0007669"/>
    <property type="project" value="UniProtKB-SubCell"/>
</dbReference>
<dbReference type="GO" id="GO:0003700">
    <property type="term" value="F:DNA-binding transcription factor activity"/>
    <property type="evidence" value="ECO:0000250"/>
    <property type="project" value="TAIR"/>
</dbReference>
<dbReference type="GO" id="GO:0000976">
    <property type="term" value="F:transcription cis-regulatory region binding"/>
    <property type="evidence" value="ECO:0000353"/>
    <property type="project" value="TAIR"/>
</dbReference>
<dbReference type="GO" id="GO:0009873">
    <property type="term" value="P:ethylene-activated signaling pathway"/>
    <property type="evidence" value="ECO:0007669"/>
    <property type="project" value="UniProtKB-KW"/>
</dbReference>
<dbReference type="CDD" id="cd00018">
    <property type="entry name" value="AP2"/>
    <property type="match status" value="1"/>
</dbReference>
<dbReference type="FunFam" id="3.30.730.10:FF:000001">
    <property type="entry name" value="Ethylene-responsive transcription factor 2"/>
    <property type="match status" value="1"/>
</dbReference>
<dbReference type="Gene3D" id="3.30.730.10">
    <property type="entry name" value="AP2/ERF domain"/>
    <property type="match status" value="1"/>
</dbReference>
<dbReference type="InterPro" id="IPR001471">
    <property type="entry name" value="AP2/ERF_dom"/>
</dbReference>
<dbReference type="InterPro" id="IPR036955">
    <property type="entry name" value="AP2/ERF_dom_sf"/>
</dbReference>
<dbReference type="InterPro" id="IPR016177">
    <property type="entry name" value="DNA-bd_dom_sf"/>
</dbReference>
<dbReference type="PANTHER" id="PTHR31729:SF7">
    <property type="entry name" value="ETHYLENE-RESPONSIVE TRANSCRIPTION FACTOR ERF008"/>
    <property type="match status" value="1"/>
</dbReference>
<dbReference type="PANTHER" id="PTHR31729">
    <property type="entry name" value="ETHYLENE-RESPONSIVE TRANSCRIPTION FACTOR RAP2-1-RELATED"/>
    <property type="match status" value="1"/>
</dbReference>
<dbReference type="Pfam" id="PF00847">
    <property type="entry name" value="AP2"/>
    <property type="match status" value="1"/>
</dbReference>
<dbReference type="PRINTS" id="PR00367">
    <property type="entry name" value="ETHRSPELEMNT"/>
</dbReference>
<dbReference type="SMART" id="SM00380">
    <property type="entry name" value="AP2"/>
    <property type="match status" value="1"/>
</dbReference>
<dbReference type="SUPFAM" id="SSF54171">
    <property type="entry name" value="DNA-binding domain"/>
    <property type="match status" value="1"/>
</dbReference>
<dbReference type="PROSITE" id="PS51032">
    <property type="entry name" value="AP2_ERF"/>
    <property type="match status" value="1"/>
</dbReference>
<name>ERF08_ARATH</name>
<gene>
    <name type="primary">ERF008</name>
    <name type="ordered locus">At2g23340</name>
    <name type="ORF">T20D16.3</name>
</gene>
<accession>O22174</accession>
<sequence length="176" mass="19120">METEAAVTATVTAATMGIGTRKRDLKPYKGIRMRKWGKWVAEIREPNKRSRIWLGSYATPEAAARAYDTAVFYLRGPSARLNFPELLAGLTVSNGGGRGGDLSAAYIRRKAAEVGAQVDALGATVVVNTGGENRGDYEKIENCRKSGNGSLERVDLNKLPDPENSDGDDDECVKRR</sequence>
<reference key="1">
    <citation type="journal article" date="1999" name="Nature">
        <title>Sequence and analysis of chromosome 2 of the plant Arabidopsis thaliana.</title>
        <authorList>
            <person name="Lin X."/>
            <person name="Kaul S."/>
            <person name="Rounsley S.D."/>
            <person name="Shea T.P."/>
            <person name="Benito M.-I."/>
            <person name="Town C.D."/>
            <person name="Fujii C.Y."/>
            <person name="Mason T.M."/>
            <person name="Bowman C.L."/>
            <person name="Barnstead M.E."/>
            <person name="Feldblyum T.V."/>
            <person name="Buell C.R."/>
            <person name="Ketchum K.A."/>
            <person name="Lee J.J."/>
            <person name="Ronning C.M."/>
            <person name="Koo H.L."/>
            <person name="Moffat K.S."/>
            <person name="Cronin L.A."/>
            <person name="Shen M."/>
            <person name="Pai G."/>
            <person name="Van Aken S."/>
            <person name="Umayam L."/>
            <person name="Tallon L.J."/>
            <person name="Gill J.E."/>
            <person name="Adams M.D."/>
            <person name="Carrera A.J."/>
            <person name="Creasy T.H."/>
            <person name="Goodman H.M."/>
            <person name="Somerville C.R."/>
            <person name="Copenhaver G.P."/>
            <person name="Preuss D."/>
            <person name="Nierman W.C."/>
            <person name="White O."/>
            <person name="Eisen J.A."/>
            <person name="Salzberg S.L."/>
            <person name="Fraser C.M."/>
            <person name="Venter J.C."/>
        </authorList>
    </citation>
    <scope>NUCLEOTIDE SEQUENCE [LARGE SCALE GENOMIC DNA]</scope>
    <source>
        <strain>cv. Columbia</strain>
    </source>
</reference>
<reference key="2">
    <citation type="journal article" date="2017" name="Plant J.">
        <title>Araport11: a complete reannotation of the Arabidopsis thaliana reference genome.</title>
        <authorList>
            <person name="Cheng C.Y."/>
            <person name="Krishnakumar V."/>
            <person name="Chan A.P."/>
            <person name="Thibaud-Nissen F."/>
            <person name="Schobel S."/>
            <person name="Town C.D."/>
        </authorList>
    </citation>
    <scope>GENOME REANNOTATION</scope>
    <source>
        <strain>cv. Columbia</strain>
    </source>
</reference>
<reference key="3">
    <citation type="journal article" date="2002" name="Science">
        <title>Functional annotation of a full-length Arabidopsis cDNA collection.</title>
        <authorList>
            <person name="Seki M."/>
            <person name="Narusaka M."/>
            <person name="Kamiya A."/>
            <person name="Ishida J."/>
            <person name="Satou M."/>
            <person name="Sakurai T."/>
            <person name="Nakajima M."/>
            <person name="Enju A."/>
            <person name="Akiyama K."/>
            <person name="Oono Y."/>
            <person name="Muramatsu M."/>
            <person name="Hayashizaki Y."/>
            <person name="Kawai J."/>
            <person name="Carninci P."/>
            <person name="Itoh M."/>
            <person name="Ishii Y."/>
            <person name="Arakawa T."/>
            <person name="Shibata K."/>
            <person name="Shinagawa A."/>
            <person name="Shinozaki K."/>
        </authorList>
    </citation>
    <scope>NUCLEOTIDE SEQUENCE [LARGE SCALE MRNA]</scope>
    <source>
        <strain>cv. Columbia</strain>
    </source>
</reference>
<reference key="4">
    <citation type="journal article" date="2003" name="Science">
        <title>Empirical analysis of transcriptional activity in the Arabidopsis genome.</title>
        <authorList>
            <person name="Yamada K."/>
            <person name="Lim J."/>
            <person name="Dale J.M."/>
            <person name="Chen H."/>
            <person name="Shinn P."/>
            <person name="Palm C.J."/>
            <person name="Southwick A.M."/>
            <person name="Wu H.C."/>
            <person name="Kim C.J."/>
            <person name="Nguyen M."/>
            <person name="Pham P.K."/>
            <person name="Cheuk R.F."/>
            <person name="Karlin-Newmann G."/>
            <person name="Liu S.X."/>
            <person name="Lam B."/>
            <person name="Sakano H."/>
            <person name="Wu T."/>
            <person name="Yu G."/>
            <person name="Miranda M."/>
            <person name="Quach H.L."/>
            <person name="Tripp M."/>
            <person name="Chang C.H."/>
            <person name="Lee J.M."/>
            <person name="Toriumi M.J."/>
            <person name="Chan M.M."/>
            <person name="Tang C.C."/>
            <person name="Onodera C.S."/>
            <person name="Deng J.M."/>
            <person name="Akiyama K."/>
            <person name="Ansari Y."/>
            <person name="Arakawa T."/>
            <person name="Banh J."/>
            <person name="Banno F."/>
            <person name="Bowser L."/>
            <person name="Brooks S.Y."/>
            <person name="Carninci P."/>
            <person name="Chao Q."/>
            <person name="Choy N."/>
            <person name="Enju A."/>
            <person name="Goldsmith A.D."/>
            <person name="Gurjal M."/>
            <person name="Hansen N.F."/>
            <person name="Hayashizaki Y."/>
            <person name="Johnson-Hopson C."/>
            <person name="Hsuan V.W."/>
            <person name="Iida K."/>
            <person name="Karnes M."/>
            <person name="Khan S."/>
            <person name="Koesema E."/>
            <person name="Ishida J."/>
            <person name="Jiang P.X."/>
            <person name="Jones T."/>
            <person name="Kawai J."/>
            <person name="Kamiya A."/>
            <person name="Meyers C."/>
            <person name="Nakajima M."/>
            <person name="Narusaka M."/>
            <person name="Seki M."/>
            <person name="Sakurai T."/>
            <person name="Satou M."/>
            <person name="Tamse R."/>
            <person name="Vaysberg M."/>
            <person name="Wallender E.K."/>
            <person name="Wong C."/>
            <person name="Yamamura Y."/>
            <person name="Yuan S."/>
            <person name="Shinozaki K."/>
            <person name="Davis R.W."/>
            <person name="Theologis A."/>
            <person name="Ecker J.R."/>
        </authorList>
    </citation>
    <scope>NUCLEOTIDE SEQUENCE [LARGE SCALE MRNA]</scope>
    <source>
        <strain>cv. Columbia</strain>
    </source>
</reference>
<reference key="5">
    <citation type="journal article" date="2006" name="Plant Physiol.">
        <title>Genome-wide analysis of the ERF gene family in Arabidopsis and rice.</title>
        <authorList>
            <person name="Nakano T."/>
            <person name="Suzuki K."/>
            <person name="Fujimura T."/>
            <person name="Shinshi H."/>
        </authorList>
    </citation>
    <scope>GENE FAMILY</scope>
    <scope>NOMENCLATURE</scope>
</reference>
<evidence type="ECO:0000250" key="1"/>
<evidence type="ECO:0000255" key="2">
    <source>
        <dbReference type="PROSITE-ProRule" id="PRU00366"/>
    </source>
</evidence>
<evidence type="ECO:0000256" key="3">
    <source>
        <dbReference type="SAM" id="MobiDB-lite"/>
    </source>
</evidence>
<evidence type="ECO:0000305" key="4"/>
<comment type="function">
    <text evidence="1">Probably acts as a transcriptional activator. Binds to the GCC-box pathogenesis-related promoter element. May be involved in the regulation of gene expression by stress factors and by components of stress signal transduction pathways (By similarity).</text>
</comment>
<comment type="subcellular location">
    <subcellularLocation>
        <location evidence="4">Nucleus</location>
    </subcellularLocation>
</comment>
<comment type="similarity">
    <text evidence="4">Belongs to the AP2/ERF transcription factor family. ERF subfamily.</text>
</comment>